<proteinExistence type="inferred from homology"/>
<comment type="function">
    <text evidence="2">Potently blocks Kv1.1/KCNA1 (85%), Kv1.2/KCNA2 (91%), Kv1.3/KCNA3 (89%), Kv1.6/KCNA6 (94%), and Shaker (97%).</text>
</comment>
<comment type="subcellular location">
    <subcellularLocation>
        <location evidence="5">Secreted</location>
    </subcellularLocation>
</comment>
<comment type="tissue specificity">
    <text evidence="5">Expressed by the venom gland.</text>
</comment>
<comment type="domain">
    <text evidence="2">Has the structural arrangement of an alpha-helix connected to a beta-sheet by disulfide bonds (CSalpha/beta).</text>
</comment>
<comment type="similarity">
    <text evidence="4">Belongs to the short scorpion toxin superfamily. Potassium channel inhibitor family. Alpha-KTx 04 subfamily.</text>
</comment>
<sequence length="59" mass="6612">MKAFYGILIIFILISMIHLSQQVFINATCTVTSQCRPKCIEAIGQAASKCINRKCKCYP</sequence>
<reference evidence="6" key="1">
    <citation type="journal article" date="2018" name="PLoS ONE">
        <title>Proteomic endorsed transcriptomic profiles of venom glands from Tityus obscurus and T. serrulatus scorpions.</title>
        <authorList>
            <person name="de Oliveira U.C."/>
            <person name="Nishiyama M.Y. Jr."/>
            <person name="Dos Santos M.B.V."/>
            <person name="Santos-da-Silva A.P."/>
            <person name="Chalkidis H.M."/>
            <person name="Souza-Imberg A."/>
            <person name="Candido D.M."/>
            <person name="Yamanouye N."/>
            <person name="Dorce V.A.C."/>
            <person name="Junqueira-de-Azevedo I.L.M."/>
        </authorList>
    </citation>
    <scope>NUCLEOTIDE SEQUENCE [MRNA]</scope>
    <source>
        <tissue>Telson</tissue>
    </source>
</reference>
<accession>A0A218QWZ7</accession>
<dbReference type="EMBL" id="GEUW01000033">
    <property type="protein sequence ID" value="JAW07012.1"/>
    <property type="molecule type" value="mRNA"/>
</dbReference>
<dbReference type="SMR" id="A0A218QWZ7"/>
<dbReference type="GO" id="GO:0005576">
    <property type="term" value="C:extracellular region"/>
    <property type="evidence" value="ECO:0007669"/>
    <property type="project" value="UniProtKB-SubCell"/>
</dbReference>
<dbReference type="GO" id="GO:0008200">
    <property type="term" value="F:ion channel inhibitor activity"/>
    <property type="evidence" value="ECO:0007669"/>
    <property type="project" value="InterPro"/>
</dbReference>
<dbReference type="GO" id="GO:0015459">
    <property type="term" value="F:potassium channel regulator activity"/>
    <property type="evidence" value="ECO:0007669"/>
    <property type="project" value="UniProtKB-KW"/>
</dbReference>
<dbReference type="GO" id="GO:0090729">
    <property type="term" value="F:toxin activity"/>
    <property type="evidence" value="ECO:0007669"/>
    <property type="project" value="UniProtKB-KW"/>
</dbReference>
<dbReference type="Gene3D" id="3.30.30.10">
    <property type="entry name" value="Knottin, scorpion toxin-like"/>
    <property type="match status" value="1"/>
</dbReference>
<dbReference type="InterPro" id="IPR036574">
    <property type="entry name" value="Scorpion_toxin-like_sf"/>
</dbReference>
<dbReference type="InterPro" id="IPR001947">
    <property type="entry name" value="Scorpion_toxinS_K_inh"/>
</dbReference>
<dbReference type="Pfam" id="PF00451">
    <property type="entry name" value="Toxin_2"/>
    <property type="match status" value="1"/>
</dbReference>
<dbReference type="SUPFAM" id="SSF57095">
    <property type="entry name" value="Scorpion toxin-like"/>
    <property type="match status" value="1"/>
</dbReference>
<dbReference type="PROSITE" id="PS01138">
    <property type="entry name" value="SCORP_SHORT_TOXIN"/>
    <property type="match status" value="1"/>
</dbReference>
<feature type="signal peptide" evidence="3">
    <location>
        <begin position="1"/>
        <end position="22"/>
    </location>
</feature>
<feature type="chain" id="PRO_5012103573" description="Putative potassium channel toxin Ts25">
    <location>
        <begin position="23"/>
        <end position="59"/>
    </location>
</feature>
<feature type="site" description="Basic residue of the functional dyad" evidence="1">
    <location>
        <position position="49"/>
    </location>
</feature>
<feature type="site" description="Aromatic residue of the functional dyad" evidence="1">
    <location>
        <position position="58"/>
    </location>
</feature>
<feature type="disulfide bond" evidence="2">
    <location>
        <begin position="29"/>
        <end position="50"/>
    </location>
</feature>
<feature type="disulfide bond" evidence="2">
    <location>
        <begin position="35"/>
        <end position="55"/>
    </location>
</feature>
<feature type="disulfide bond" evidence="2">
    <location>
        <begin position="39"/>
        <end position="57"/>
    </location>
</feature>
<protein>
    <recommendedName>
        <fullName evidence="4">Putative potassium channel toxin Ts25</fullName>
    </recommendedName>
    <alternativeName>
        <fullName evidence="4">Putative KTx</fullName>
    </alternativeName>
    <alternativeName>
        <fullName evidence="4">Tityustoxin-25</fullName>
    </alternativeName>
</protein>
<name>KTX25_TITSE</name>
<keyword id="KW-1015">Disulfide bond</keyword>
<keyword id="KW-0872">Ion channel impairing toxin</keyword>
<keyword id="KW-0528">Neurotoxin</keyword>
<keyword id="KW-0632">Potassium channel impairing toxin</keyword>
<keyword id="KW-0964">Secreted</keyword>
<keyword id="KW-0732">Signal</keyword>
<keyword id="KW-0800">Toxin</keyword>
<keyword id="KW-1220">Voltage-gated potassium channel impairing toxin</keyword>
<organism>
    <name type="scientific">Tityus serrulatus</name>
    <name type="common">Brazilian scorpion</name>
    <dbReference type="NCBI Taxonomy" id="6887"/>
    <lineage>
        <taxon>Eukaryota</taxon>
        <taxon>Metazoa</taxon>
        <taxon>Ecdysozoa</taxon>
        <taxon>Arthropoda</taxon>
        <taxon>Chelicerata</taxon>
        <taxon>Arachnida</taxon>
        <taxon>Scorpiones</taxon>
        <taxon>Buthida</taxon>
        <taxon>Buthoidea</taxon>
        <taxon>Buthidae</taxon>
        <taxon>Tityus</taxon>
    </lineage>
</organism>
<evidence type="ECO:0000250" key="1">
    <source>
        <dbReference type="UniProtKB" id="O46028"/>
    </source>
</evidence>
<evidence type="ECO:0000250" key="2">
    <source>
        <dbReference type="UniProtKB" id="P46114"/>
    </source>
</evidence>
<evidence type="ECO:0000255" key="3"/>
<evidence type="ECO:0000305" key="4"/>
<evidence type="ECO:0000305" key="5">
    <source>
    </source>
</evidence>
<evidence type="ECO:0000312" key="6">
    <source>
        <dbReference type="EMBL" id="JAW07012.1"/>
    </source>
</evidence>